<reference key="1">
    <citation type="journal article" date="1996" name="Nucleic Acids Res.">
        <title>Complete sequence analysis of the genome of the bacterium Mycoplasma pneumoniae.</title>
        <authorList>
            <person name="Himmelreich R."/>
            <person name="Hilbert H."/>
            <person name="Plagens H."/>
            <person name="Pirkl E."/>
            <person name="Li B.-C."/>
            <person name="Herrmann R."/>
        </authorList>
    </citation>
    <scope>NUCLEOTIDE SEQUENCE [LARGE SCALE GENOMIC DNA]</scope>
    <source>
        <strain>ATCC 29342 / M129 / Subtype 1</strain>
    </source>
</reference>
<comment type="function">
    <text evidence="1">Catalyzes the attachment of threonine to tRNA(Thr) in a two-step reaction: L-threonine is first activated by ATP to form Thr-AMP and then transferred to the acceptor end of tRNA(Thr). Also edits incorrectly charged L-seryl-tRNA(Thr).</text>
</comment>
<comment type="catalytic activity">
    <reaction evidence="1">
        <text>tRNA(Thr) + L-threonine + ATP = L-threonyl-tRNA(Thr) + AMP + diphosphate + H(+)</text>
        <dbReference type="Rhea" id="RHEA:24624"/>
        <dbReference type="Rhea" id="RHEA-COMP:9670"/>
        <dbReference type="Rhea" id="RHEA-COMP:9704"/>
        <dbReference type="ChEBI" id="CHEBI:15378"/>
        <dbReference type="ChEBI" id="CHEBI:30616"/>
        <dbReference type="ChEBI" id="CHEBI:33019"/>
        <dbReference type="ChEBI" id="CHEBI:57926"/>
        <dbReference type="ChEBI" id="CHEBI:78442"/>
        <dbReference type="ChEBI" id="CHEBI:78534"/>
        <dbReference type="ChEBI" id="CHEBI:456215"/>
        <dbReference type="EC" id="6.1.1.3"/>
    </reaction>
</comment>
<comment type="cofactor">
    <cofactor evidence="1">
        <name>Zn(2+)</name>
        <dbReference type="ChEBI" id="CHEBI:29105"/>
    </cofactor>
    <text evidence="1">Binds 1 zinc ion per subunit.</text>
</comment>
<comment type="subunit">
    <text evidence="1">Homodimer.</text>
</comment>
<comment type="subcellular location">
    <subcellularLocation>
        <location evidence="1">Cytoplasm</location>
    </subcellularLocation>
</comment>
<comment type="similarity">
    <text evidence="1">Belongs to the class-II aminoacyl-tRNA synthetase family.</text>
</comment>
<name>SYT_MYCPN</name>
<sequence>MLAGVLLLQSWLKANYPQVQFGSYGVQEGEFYLDFKVEKSFSIKEFEQLEQDLNAYFNQLNNVVQTKIDKTKSLKFFQADPFTTTLIESIESNSLVVTTVNEQTFWVHDLVLPLPKQGFVKLLNVSANYFLGDPTKPQLQRLVGIFAASKEQLKSLIAANEQKYQNDHRAIGKRLEIFTFDPLVGAGFPIWLEKGAVLKKIIGDFVHYQQLMFGFKTVSSPVLANLELYKISGHYVHYSEDMFPSVKLENQMMMLRPMTCPHHCLIFKHKRRSYKELPQRFCEDSILHRFEASGGLTGLERVRCMTLLDNHIFCRTDQIKAEIKNAFKLIQTVNNKFGFSFDRIDLALHDPNNKAKFIDNDQLWANSESQIESVFKELNVPYKIDVGAAAFYGPKIDFQFKTALNKMITIATIQLDFLLPERFELRYFDEQSNAQTPVIIHVGIVGTYERFIAALLEKTHGNLPLWMAPVQVVVIPVNIDKHEKAAKKLYQKLLKENIRVSLDESEDRLGKKVRTAIVNKIPLQIIVGDKEMQDLTRITCRGFKGEKVQKLYWANFVKKVRKDG</sequence>
<protein>
    <recommendedName>
        <fullName evidence="1">Threonine--tRNA ligase</fullName>
        <ecNumber evidence="1">6.1.1.3</ecNumber>
    </recommendedName>
    <alternativeName>
        <fullName evidence="1">Threonyl-tRNA synthetase</fullName>
        <shortName evidence="1">ThrRS</shortName>
    </alternativeName>
</protein>
<gene>
    <name evidence="1" type="primary">thrS</name>
    <name type="ordered locus">MPN_553</name>
    <name type="ORF">MP289</name>
</gene>
<organism>
    <name type="scientific">Mycoplasma pneumoniae (strain ATCC 29342 / M129 / Subtype 1)</name>
    <name type="common">Mycoplasmoides pneumoniae</name>
    <dbReference type="NCBI Taxonomy" id="272634"/>
    <lineage>
        <taxon>Bacteria</taxon>
        <taxon>Bacillati</taxon>
        <taxon>Mycoplasmatota</taxon>
        <taxon>Mycoplasmoidales</taxon>
        <taxon>Mycoplasmoidaceae</taxon>
        <taxon>Mycoplasmoides</taxon>
    </lineage>
</organism>
<evidence type="ECO:0000255" key="1">
    <source>
        <dbReference type="HAMAP-Rule" id="MF_00184"/>
    </source>
</evidence>
<proteinExistence type="inferred from homology"/>
<dbReference type="EC" id="6.1.1.3" evidence="1"/>
<dbReference type="EMBL" id="U00089">
    <property type="protein sequence ID" value="AAB95937.1"/>
    <property type="molecule type" value="Genomic_DNA"/>
</dbReference>
<dbReference type="PIR" id="S73615">
    <property type="entry name" value="S73615"/>
</dbReference>
<dbReference type="RefSeq" id="NP_110242.1">
    <property type="nucleotide sequence ID" value="NC_000912.1"/>
</dbReference>
<dbReference type="RefSeq" id="WP_010874910.1">
    <property type="nucleotide sequence ID" value="NZ_OU342337.1"/>
</dbReference>
<dbReference type="SMR" id="P75225"/>
<dbReference type="IntAct" id="P75225">
    <property type="interactions" value="4"/>
</dbReference>
<dbReference type="STRING" id="272634.MPN_553"/>
<dbReference type="EnsemblBacteria" id="AAB95937">
    <property type="protein sequence ID" value="AAB95937"/>
    <property type="gene ID" value="MPN_553"/>
</dbReference>
<dbReference type="GeneID" id="66608765"/>
<dbReference type="KEGG" id="mpn:MPN_553"/>
<dbReference type="PATRIC" id="fig|272634.6.peg.615"/>
<dbReference type="HOGENOM" id="CLU_008554_3_2_14"/>
<dbReference type="OrthoDB" id="9802304at2"/>
<dbReference type="BioCyc" id="MPNE272634:G1GJ3-909-MONOMER"/>
<dbReference type="Proteomes" id="UP000000808">
    <property type="component" value="Chromosome"/>
</dbReference>
<dbReference type="GO" id="GO:0005737">
    <property type="term" value="C:cytoplasm"/>
    <property type="evidence" value="ECO:0007669"/>
    <property type="project" value="UniProtKB-SubCell"/>
</dbReference>
<dbReference type="GO" id="GO:0005524">
    <property type="term" value="F:ATP binding"/>
    <property type="evidence" value="ECO:0007669"/>
    <property type="project" value="UniProtKB-UniRule"/>
</dbReference>
<dbReference type="GO" id="GO:0046872">
    <property type="term" value="F:metal ion binding"/>
    <property type="evidence" value="ECO:0007669"/>
    <property type="project" value="UniProtKB-KW"/>
</dbReference>
<dbReference type="GO" id="GO:0004829">
    <property type="term" value="F:threonine-tRNA ligase activity"/>
    <property type="evidence" value="ECO:0007669"/>
    <property type="project" value="UniProtKB-UniRule"/>
</dbReference>
<dbReference type="GO" id="GO:0000049">
    <property type="term" value="F:tRNA binding"/>
    <property type="evidence" value="ECO:0007669"/>
    <property type="project" value="UniProtKB-KW"/>
</dbReference>
<dbReference type="GO" id="GO:0006435">
    <property type="term" value="P:threonyl-tRNA aminoacylation"/>
    <property type="evidence" value="ECO:0007669"/>
    <property type="project" value="UniProtKB-UniRule"/>
</dbReference>
<dbReference type="CDD" id="cd00860">
    <property type="entry name" value="ThrRS_anticodon"/>
    <property type="match status" value="1"/>
</dbReference>
<dbReference type="CDD" id="cd00771">
    <property type="entry name" value="ThrRS_core"/>
    <property type="match status" value="1"/>
</dbReference>
<dbReference type="FunFam" id="3.30.930.10:FF:000002">
    <property type="entry name" value="Threonine--tRNA ligase"/>
    <property type="match status" value="1"/>
</dbReference>
<dbReference type="Gene3D" id="3.30.54.20">
    <property type="match status" value="1"/>
</dbReference>
<dbReference type="Gene3D" id="3.40.50.800">
    <property type="entry name" value="Anticodon-binding domain"/>
    <property type="match status" value="1"/>
</dbReference>
<dbReference type="Gene3D" id="3.30.930.10">
    <property type="entry name" value="Bira Bifunctional Protein, Domain 2"/>
    <property type="match status" value="1"/>
</dbReference>
<dbReference type="Gene3D" id="3.30.980.10">
    <property type="entry name" value="Threonyl-trna Synthetase, Chain A, domain 2"/>
    <property type="match status" value="1"/>
</dbReference>
<dbReference type="HAMAP" id="MF_00184">
    <property type="entry name" value="Thr_tRNA_synth"/>
    <property type="match status" value="1"/>
</dbReference>
<dbReference type="InterPro" id="IPR002314">
    <property type="entry name" value="aa-tRNA-synt_IIb"/>
</dbReference>
<dbReference type="InterPro" id="IPR006195">
    <property type="entry name" value="aa-tRNA-synth_II"/>
</dbReference>
<dbReference type="InterPro" id="IPR045864">
    <property type="entry name" value="aa-tRNA-synth_II/BPL/LPL"/>
</dbReference>
<dbReference type="InterPro" id="IPR004154">
    <property type="entry name" value="Anticodon-bd"/>
</dbReference>
<dbReference type="InterPro" id="IPR036621">
    <property type="entry name" value="Anticodon-bd_dom_sf"/>
</dbReference>
<dbReference type="InterPro" id="IPR002320">
    <property type="entry name" value="Thr-tRNA-ligase_IIa"/>
</dbReference>
<dbReference type="InterPro" id="IPR018163">
    <property type="entry name" value="Thr/Ala-tRNA-synth_IIc_edit"/>
</dbReference>
<dbReference type="InterPro" id="IPR047246">
    <property type="entry name" value="ThrRS_anticodon"/>
</dbReference>
<dbReference type="InterPro" id="IPR033728">
    <property type="entry name" value="ThrRS_core"/>
</dbReference>
<dbReference type="NCBIfam" id="TIGR00418">
    <property type="entry name" value="thrS"/>
    <property type="match status" value="1"/>
</dbReference>
<dbReference type="PANTHER" id="PTHR11451:SF56">
    <property type="entry name" value="THREONINE--TRNA LIGASE 1"/>
    <property type="match status" value="1"/>
</dbReference>
<dbReference type="PANTHER" id="PTHR11451">
    <property type="entry name" value="THREONINE-TRNA LIGASE"/>
    <property type="match status" value="1"/>
</dbReference>
<dbReference type="Pfam" id="PF03129">
    <property type="entry name" value="HGTP_anticodon"/>
    <property type="match status" value="1"/>
</dbReference>
<dbReference type="Pfam" id="PF00587">
    <property type="entry name" value="tRNA-synt_2b"/>
    <property type="match status" value="1"/>
</dbReference>
<dbReference type="PRINTS" id="PR01047">
    <property type="entry name" value="TRNASYNTHTHR"/>
</dbReference>
<dbReference type="SUPFAM" id="SSF52954">
    <property type="entry name" value="Class II aaRS ABD-related"/>
    <property type="match status" value="1"/>
</dbReference>
<dbReference type="SUPFAM" id="SSF55681">
    <property type="entry name" value="Class II aaRS and biotin synthetases"/>
    <property type="match status" value="1"/>
</dbReference>
<dbReference type="SUPFAM" id="SSF55186">
    <property type="entry name" value="ThrRS/AlaRS common domain"/>
    <property type="match status" value="1"/>
</dbReference>
<dbReference type="PROSITE" id="PS50862">
    <property type="entry name" value="AA_TRNA_LIGASE_II"/>
    <property type="match status" value="1"/>
</dbReference>
<accession>P75225</accession>
<keyword id="KW-0030">Aminoacyl-tRNA synthetase</keyword>
<keyword id="KW-0067">ATP-binding</keyword>
<keyword id="KW-0963">Cytoplasm</keyword>
<keyword id="KW-0436">Ligase</keyword>
<keyword id="KW-0479">Metal-binding</keyword>
<keyword id="KW-0547">Nucleotide-binding</keyword>
<keyword id="KW-0648">Protein biosynthesis</keyword>
<keyword id="KW-1185">Reference proteome</keyword>
<keyword id="KW-0694">RNA-binding</keyword>
<keyword id="KW-0820">tRNA-binding</keyword>
<keyword id="KW-0862">Zinc</keyword>
<feature type="chain" id="PRO_0000101010" description="Threonine--tRNA ligase">
    <location>
        <begin position="1"/>
        <end position="564"/>
    </location>
</feature>
<feature type="region of interest" description="Catalytic" evidence="1">
    <location>
        <begin position="167"/>
        <end position="464"/>
    </location>
</feature>
<feature type="binding site" evidence="1">
    <location>
        <position position="260"/>
    </location>
    <ligand>
        <name>Zn(2+)</name>
        <dbReference type="ChEBI" id="CHEBI:29105"/>
    </ligand>
</feature>
<feature type="binding site" evidence="1">
    <location>
        <position position="311"/>
    </location>
    <ligand>
        <name>Zn(2+)</name>
        <dbReference type="ChEBI" id="CHEBI:29105"/>
    </ligand>
</feature>
<feature type="binding site" evidence="1">
    <location>
        <position position="441"/>
    </location>
    <ligand>
        <name>Zn(2+)</name>
        <dbReference type="ChEBI" id="CHEBI:29105"/>
    </ligand>
</feature>